<comment type="function">
    <text evidence="1">Involved in peptide bond synthesis. Stimulates efficient translation and peptide-bond synthesis on native or reconstituted 70S ribosomes in vitro. Probably functions indirectly by altering the affinity of the ribosome for aminoacyl-tRNA, thus increasing their reactivity as acceptors for peptidyl transferase.</text>
</comment>
<comment type="pathway">
    <text evidence="1">Protein biosynthesis; polypeptide chain elongation.</text>
</comment>
<comment type="subcellular location">
    <subcellularLocation>
        <location evidence="1">Cytoplasm</location>
    </subcellularLocation>
</comment>
<comment type="similarity">
    <text evidence="1">Belongs to the elongation factor P family.</text>
</comment>
<dbReference type="EMBL" id="CP000548">
    <property type="protein sequence ID" value="ABO04319.1"/>
    <property type="molecule type" value="Genomic_DNA"/>
</dbReference>
<dbReference type="RefSeq" id="WP_004193484.1">
    <property type="nucleotide sequence ID" value="NZ_CP007802.1"/>
</dbReference>
<dbReference type="SMR" id="A3MM35"/>
<dbReference type="GeneID" id="93061002"/>
<dbReference type="KEGG" id="bmaz:BM44_1417"/>
<dbReference type="KEGG" id="bmn:BMA10247_1782"/>
<dbReference type="PATRIC" id="fig|320389.8.peg.1578"/>
<dbReference type="UniPathway" id="UPA00345"/>
<dbReference type="GO" id="GO:0005737">
    <property type="term" value="C:cytoplasm"/>
    <property type="evidence" value="ECO:0007669"/>
    <property type="project" value="UniProtKB-SubCell"/>
</dbReference>
<dbReference type="GO" id="GO:0003746">
    <property type="term" value="F:translation elongation factor activity"/>
    <property type="evidence" value="ECO:0007669"/>
    <property type="project" value="UniProtKB-UniRule"/>
</dbReference>
<dbReference type="GO" id="GO:0043043">
    <property type="term" value="P:peptide biosynthetic process"/>
    <property type="evidence" value="ECO:0007669"/>
    <property type="project" value="InterPro"/>
</dbReference>
<dbReference type="CDD" id="cd04470">
    <property type="entry name" value="S1_EF-P_repeat_1"/>
    <property type="match status" value="1"/>
</dbReference>
<dbReference type="CDD" id="cd05794">
    <property type="entry name" value="S1_EF-P_repeat_2"/>
    <property type="match status" value="1"/>
</dbReference>
<dbReference type="FunFam" id="2.30.30.30:FF:000003">
    <property type="entry name" value="Elongation factor P"/>
    <property type="match status" value="1"/>
</dbReference>
<dbReference type="FunFam" id="2.40.50.140:FF:000004">
    <property type="entry name" value="Elongation factor P"/>
    <property type="match status" value="1"/>
</dbReference>
<dbReference type="FunFam" id="2.40.50.140:FF:000009">
    <property type="entry name" value="Elongation factor P"/>
    <property type="match status" value="1"/>
</dbReference>
<dbReference type="Gene3D" id="2.30.30.30">
    <property type="match status" value="1"/>
</dbReference>
<dbReference type="Gene3D" id="2.40.50.140">
    <property type="entry name" value="Nucleic acid-binding proteins"/>
    <property type="match status" value="2"/>
</dbReference>
<dbReference type="HAMAP" id="MF_00141">
    <property type="entry name" value="EF_P"/>
    <property type="match status" value="1"/>
</dbReference>
<dbReference type="InterPro" id="IPR015365">
    <property type="entry name" value="Elong-fact-P_C"/>
</dbReference>
<dbReference type="InterPro" id="IPR012340">
    <property type="entry name" value="NA-bd_OB-fold"/>
</dbReference>
<dbReference type="InterPro" id="IPR014722">
    <property type="entry name" value="Rib_uL2_dom2"/>
</dbReference>
<dbReference type="InterPro" id="IPR020599">
    <property type="entry name" value="Transl_elong_fac_P/YeiP"/>
</dbReference>
<dbReference type="InterPro" id="IPR013185">
    <property type="entry name" value="Transl_elong_KOW-like"/>
</dbReference>
<dbReference type="InterPro" id="IPR001059">
    <property type="entry name" value="Transl_elong_P/YeiP_cen"/>
</dbReference>
<dbReference type="InterPro" id="IPR013852">
    <property type="entry name" value="Transl_elong_P/YeiP_CS"/>
</dbReference>
<dbReference type="InterPro" id="IPR011768">
    <property type="entry name" value="Transl_elongation_fac_P"/>
</dbReference>
<dbReference type="InterPro" id="IPR008991">
    <property type="entry name" value="Translation_prot_SH3-like_sf"/>
</dbReference>
<dbReference type="NCBIfam" id="TIGR00038">
    <property type="entry name" value="efp"/>
    <property type="match status" value="1"/>
</dbReference>
<dbReference type="NCBIfam" id="NF001810">
    <property type="entry name" value="PRK00529.1"/>
    <property type="match status" value="1"/>
</dbReference>
<dbReference type="PANTHER" id="PTHR30053">
    <property type="entry name" value="ELONGATION FACTOR P"/>
    <property type="match status" value="1"/>
</dbReference>
<dbReference type="PANTHER" id="PTHR30053:SF12">
    <property type="entry name" value="ELONGATION FACTOR P (EF-P) FAMILY PROTEIN"/>
    <property type="match status" value="1"/>
</dbReference>
<dbReference type="Pfam" id="PF01132">
    <property type="entry name" value="EFP"/>
    <property type="match status" value="1"/>
</dbReference>
<dbReference type="Pfam" id="PF08207">
    <property type="entry name" value="EFP_N"/>
    <property type="match status" value="1"/>
</dbReference>
<dbReference type="Pfam" id="PF09285">
    <property type="entry name" value="Elong-fact-P_C"/>
    <property type="match status" value="1"/>
</dbReference>
<dbReference type="PIRSF" id="PIRSF005901">
    <property type="entry name" value="EF-P"/>
    <property type="match status" value="1"/>
</dbReference>
<dbReference type="SMART" id="SM01185">
    <property type="entry name" value="EFP"/>
    <property type="match status" value="1"/>
</dbReference>
<dbReference type="SMART" id="SM00841">
    <property type="entry name" value="Elong-fact-P_C"/>
    <property type="match status" value="1"/>
</dbReference>
<dbReference type="SUPFAM" id="SSF50249">
    <property type="entry name" value="Nucleic acid-binding proteins"/>
    <property type="match status" value="2"/>
</dbReference>
<dbReference type="SUPFAM" id="SSF50104">
    <property type="entry name" value="Translation proteins SH3-like domain"/>
    <property type="match status" value="1"/>
</dbReference>
<dbReference type="PROSITE" id="PS01275">
    <property type="entry name" value="EFP"/>
    <property type="match status" value="1"/>
</dbReference>
<keyword id="KW-0963">Cytoplasm</keyword>
<keyword id="KW-0251">Elongation factor</keyword>
<keyword id="KW-0648">Protein biosynthesis</keyword>
<protein>
    <recommendedName>
        <fullName evidence="1">Elongation factor P</fullName>
        <shortName evidence="1">EF-P</shortName>
    </recommendedName>
</protein>
<sequence>MKTAQELRVGNVVMIGNDAWVVSKTEYNKSGRNAAVVKMKLKNLLNGGGQESVYKADDKFEVVVLDRKEVTYSYFADPMYVFMDADYNQYEVEAEMMGDALNYLEDGMACEVVFYNEKAISVELPTILVREITYTEPAVKGDTSSGKVLKNAKLATGFELQVPLFCNTGDKIEIDTRTNEYRSRA</sequence>
<name>EFP_BURM7</name>
<reference key="1">
    <citation type="journal article" date="2010" name="Genome Biol. Evol.">
        <title>Continuing evolution of Burkholderia mallei through genome reduction and large-scale rearrangements.</title>
        <authorList>
            <person name="Losada L."/>
            <person name="Ronning C.M."/>
            <person name="DeShazer D."/>
            <person name="Woods D."/>
            <person name="Fedorova N."/>
            <person name="Kim H.S."/>
            <person name="Shabalina S.A."/>
            <person name="Pearson T.R."/>
            <person name="Brinkac L."/>
            <person name="Tan P."/>
            <person name="Nandi T."/>
            <person name="Crabtree J."/>
            <person name="Badger J."/>
            <person name="Beckstrom-Sternberg S."/>
            <person name="Saqib M."/>
            <person name="Schutzer S.E."/>
            <person name="Keim P."/>
            <person name="Nierman W.C."/>
        </authorList>
    </citation>
    <scope>NUCLEOTIDE SEQUENCE [LARGE SCALE GENOMIC DNA]</scope>
    <source>
        <strain>NCTC 10247</strain>
    </source>
</reference>
<gene>
    <name evidence="1" type="primary">efp</name>
    <name type="ordered locus">BMA10247_1782</name>
</gene>
<feature type="chain" id="PRO_1000010697" description="Elongation factor P">
    <location>
        <begin position="1"/>
        <end position="185"/>
    </location>
</feature>
<accession>A3MM35</accession>
<evidence type="ECO:0000255" key="1">
    <source>
        <dbReference type="HAMAP-Rule" id="MF_00141"/>
    </source>
</evidence>
<proteinExistence type="inferred from homology"/>
<organism>
    <name type="scientific">Burkholderia mallei (strain NCTC 10247)</name>
    <dbReference type="NCBI Taxonomy" id="320389"/>
    <lineage>
        <taxon>Bacteria</taxon>
        <taxon>Pseudomonadati</taxon>
        <taxon>Pseudomonadota</taxon>
        <taxon>Betaproteobacteria</taxon>
        <taxon>Burkholderiales</taxon>
        <taxon>Burkholderiaceae</taxon>
        <taxon>Burkholderia</taxon>
        <taxon>pseudomallei group</taxon>
    </lineage>
</organism>